<name>GPDA_CORU7</name>
<reference key="1">
    <citation type="journal article" date="2008" name="J. Biotechnol.">
        <title>The lifestyle of Corynebacterium urealyticum derived from its complete genome sequence established by pyrosequencing.</title>
        <authorList>
            <person name="Tauch A."/>
            <person name="Trost E."/>
            <person name="Tilker A."/>
            <person name="Ludewig U."/>
            <person name="Schneiker S."/>
            <person name="Goesmann A."/>
            <person name="Arnold W."/>
            <person name="Bekel T."/>
            <person name="Brinkrolf K."/>
            <person name="Brune I."/>
            <person name="Goetker S."/>
            <person name="Kalinowski J."/>
            <person name="Kamp P.-B."/>
            <person name="Lobo F.P."/>
            <person name="Viehoever P."/>
            <person name="Weisshaar B."/>
            <person name="Soriano F."/>
            <person name="Droege M."/>
            <person name="Puehler A."/>
        </authorList>
    </citation>
    <scope>NUCLEOTIDE SEQUENCE [LARGE SCALE GENOMIC DNA]</scope>
    <source>
        <strain>ATCC 43042 / DSM 7109</strain>
    </source>
</reference>
<gene>
    <name evidence="1" type="primary">gpsA</name>
    <name type="ordered locus">cu0777</name>
</gene>
<feature type="chain" id="PRO_1000190130" description="Glycerol-3-phosphate dehydrogenase [NAD(P)+]">
    <location>
        <begin position="1"/>
        <end position="332"/>
    </location>
</feature>
<feature type="active site" description="Proton acceptor" evidence="1">
    <location>
        <position position="191"/>
    </location>
</feature>
<feature type="binding site" evidence="1">
    <location>
        <position position="11"/>
    </location>
    <ligand>
        <name>NADPH</name>
        <dbReference type="ChEBI" id="CHEBI:57783"/>
    </ligand>
</feature>
<feature type="binding site" evidence="1">
    <location>
        <position position="12"/>
    </location>
    <ligand>
        <name>NADPH</name>
        <dbReference type="ChEBI" id="CHEBI:57783"/>
    </ligand>
</feature>
<feature type="binding site" evidence="1">
    <location>
        <position position="32"/>
    </location>
    <ligand>
        <name>NADPH</name>
        <dbReference type="ChEBI" id="CHEBI:57783"/>
    </ligand>
</feature>
<feature type="binding site" evidence="1">
    <location>
        <position position="33"/>
    </location>
    <ligand>
        <name>NADPH</name>
        <dbReference type="ChEBI" id="CHEBI:57783"/>
    </ligand>
</feature>
<feature type="binding site" evidence="1">
    <location>
        <position position="106"/>
    </location>
    <ligand>
        <name>NADPH</name>
        <dbReference type="ChEBI" id="CHEBI:57783"/>
    </ligand>
</feature>
<feature type="binding site" evidence="1">
    <location>
        <position position="106"/>
    </location>
    <ligand>
        <name>sn-glycerol 3-phosphate</name>
        <dbReference type="ChEBI" id="CHEBI:57597"/>
    </ligand>
</feature>
<feature type="binding site" evidence="1">
    <location>
        <position position="136"/>
    </location>
    <ligand>
        <name>sn-glycerol 3-phosphate</name>
        <dbReference type="ChEBI" id="CHEBI:57597"/>
    </ligand>
</feature>
<feature type="binding site" evidence="1">
    <location>
        <position position="140"/>
    </location>
    <ligand>
        <name>NADPH</name>
        <dbReference type="ChEBI" id="CHEBI:57783"/>
    </ligand>
</feature>
<feature type="binding site" evidence="1">
    <location>
        <position position="191"/>
    </location>
    <ligand>
        <name>sn-glycerol 3-phosphate</name>
        <dbReference type="ChEBI" id="CHEBI:57597"/>
    </ligand>
</feature>
<feature type="binding site" evidence="1">
    <location>
        <position position="244"/>
    </location>
    <ligand>
        <name>sn-glycerol 3-phosphate</name>
        <dbReference type="ChEBI" id="CHEBI:57597"/>
    </ligand>
</feature>
<feature type="binding site" evidence="1">
    <location>
        <position position="254"/>
    </location>
    <ligand>
        <name>sn-glycerol 3-phosphate</name>
        <dbReference type="ChEBI" id="CHEBI:57597"/>
    </ligand>
</feature>
<feature type="binding site" evidence="1">
    <location>
        <position position="255"/>
    </location>
    <ligand>
        <name>NADPH</name>
        <dbReference type="ChEBI" id="CHEBI:57783"/>
    </ligand>
</feature>
<feature type="binding site" evidence="1">
    <location>
        <position position="255"/>
    </location>
    <ligand>
        <name>sn-glycerol 3-phosphate</name>
        <dbReference type="ChEBI" id="CHEBI:57597"/>
    </ligand>
</feature>
<feature type="binding site" evidence="1">
    <location>
        <position position="256"/>
    </location>
    <ligand>
        <name>sn-glycerol 3-phosphate</name>
        <dbReference type="ChEBI" id="CHEBI:57597"/>
    </ligand>
</feature>
<feature type="binding site" evidence="1">
    <location>
        <position position="280"/>
    </location>
    <ligand>
        <name>NADPH</name>
        <dbReference type="ChEBI" id="CHEBI:57783"/>
    </ligand>
</feature>
<feature type="binding site" evidence="1">
    <location>
        <position position="282"/>
    </location>
    <ligand>
        <name>NADPH</name>
        <dbReference type="ChEBI" id="CHEBI:57783"/>
    </ligand>
</feature>
<protein>
    <recommendedName>
        <fullName evidence="1">Glycerol-3-phosphate dehydrogenase [NAD(P)+]</fullName>
        <ecNumber evidence="1">1.1.1.94</ecNumber>
    </recommendedName>
    <alternativeName>
        <fullName evidence="1">NAD(P)(+)-dependent glycerol-3-phosphate dehydrogenase</fullName>
    </alternativeName>
    <alternativeName>
        <fullName evidence="1">NAD(P)H-dependent dihydroxyacetone-phosphate reductase</fullName>
    </alternativeName>
</protein>
<proteinExistence type="inferred from homology"/>
<dbReference type="EC" id="1.1.1.94" evidence="1"/>
<dbReference type="EMBL" id="AM942444">
    <property type="protein sequence ID" value="CAQ04737.1"/>
    <property type="molecule type" value="Genomic_DNA"/>
</dbReference>
<dbReference type="RefSeq" id="WP_012360026.1">
    <property type="nucleotide sequence ID" value="NC_010545.1"/>
</dbReference>
<dbReference type="SMR" id="B1VG48"/>
<dbReference type="STRING" id="504474.cu0777"/>
<dbReference type="GeneID" id="60603555"/>
<dbReference type="KEGG" id="cur:cu0777"/>
<dbReference type="eggNOG" id="COG0240">
    <property type="taxonomic scope" value="Bacteria"/>
</dbReference>
<dbReference type="HOGENOM" id="CLU_033449_0_2_11"/>
<dbReference type="UniPathway" id="UPA00940"/>
<dbReference type="Proteomes" id="UP000001727">
    <property type="component" value="Chromosome"/>
</dbReference>
<dbReference type="GO" id="GO:0005829">
    <property type="term" value="C:cytosol"/>
    <property type="evidence" value="ECO:0007669"/>
    <property type="project" value="TreeGrafter"/>
</dbReference>
<dbReference type="GO" id="GO:0047952">
    <property type="term" value="F:glycerol-3-phosphate dehydrogenase [NAD(P)+] activity"/>
    <property type="evidence" value="ECO:0007669"/>
    <property type="project" value="UniProtKB-UniRule"/>
</dbReference>
<dbReference type="GO" id="GO:0051287">
    <property type="term" value="F:NAD binding"/>
    <property type="evidence" value="ECO:0007669"/>
    <property type="project" value="InterPro"/>
</dbReference>
<dbReference type="GO" id="GO:0005975">
    <property type="term" value="P:carbohydrate metabolic process"/>
    <property type="evidence" value="ECO:0007669"/>
    <property type="project" value="InterPro"/>
</dbReference>
<dbReference type="GO" id="GO:0046167">
    <property type="term" value="P:glycerol-3-phosphate biosynthetic process"/>
    <property type="evidence" value="ECO:0007669"/>
    <property type="project" value="UniProtKB-UniRule"/>
</dbReference>
<dbReference type="GO" id="GO:0046168">
    <property type="term" value="P:glycerol-3-phosphate catabolic process"/>
    <property type="evidence" value="ECO:0007669"/>
    <property type="project" value="InterPro"/>
</dbReference>
<dbReference type="GO" id="GO:0006650">
    <property type="term" value="P:glycerophospholipid metabolic process"/>
    <property type="evidence" value="ECO:0007669"/>
    <property type="project" value="UniProtKB-UniRule"/>
</dbReference>
<dbReference type="GO" id="GO:0008654">
    <property type="term" value="P:phospholipid biosynthetic process"/>
    <property type="evidence" value="ECO:0007669"/>
    <property type="project" value="UniProtKB-KW"/>
</dbReference>
<dbReference type="FunFam" id="1.10.1040.10:FF:000001">
    <property type="entry name" value="Glycerol-3-phosphate dehydrogenase [NAD(P)+]"/>
    <property type="match status" value="1"/>
</dbReference>
<dbReference type="FunFam" id="3.40.50.720:FF:000019">
    <property type="entry name" value="Glycerol-3-phosphate dehydrogenase [NAD(P)+]"/>
    <property type="match status" value="1"/>
</dbReference>
<dbReference type="Gene3D" id="1.10.1040.10">
    <property type="entry name" value="N-(1-d-carboxylethyl)-l-norvaline Dehydrogenase, domain 2"/>
    <property type="match status" value="1"/>
</dbReference>
<dbReference type="Gene3D" id="3.40.50.720">
    <property type="entry name" value="NAD(P)-binding Rossmann-like Domain"/>
    <property type="match status" value="1"/>
</dbReference>
<dbReference type="HAMAP" id="MF_00394">
    <property type="entry name" value="NAD_Glyc3P_dehydrog"/>
    <property type="match status" value="1"/>
</dbReference>
<dbReference type="InterPro" id="IPR008927">
    <property type="entry name" value="6-PGluconate_DH-like_C_sf"/>
</dbReference>
<dbReference type="InterPro" id="IPR013328">
    <property type="entry name" value="6PGD_dom2"/>
</dbReference>
<dbReference type="InterPro" id="IPR006168">
    <property type="entry name" value="G3P_DH_NAD-dep"/>
</dbReference>
<dbReference type="InterPro" id="IPR006109">
    <property type="entry name" value="G3P_DH_NAD-dep_C"/>
</dbReference>
<dbReference type="InterPro" id="IPR011128">
    <property type="entry name" value="G3P_DH_NAD-dep_N"/>
</dbReference>
<dbReference type="InterPro" id="IPR036291">
    <property type="entry name" value="NAD(P)-bd_dom_sf"/>
</dbReference>
<dbReference type="NCBIfam" id="NF000940">
    <property type="entry name" value="PRK00094.1-2"/>
    <property type="match status" value="1"/>
</dbReference>
<dbReference type="NCBIfam" id="NF000942">
    <property type="entry name" value="PRK00094.1-4"/>
    <property type="match status" value="1"/>
</dbReference>
<dbReference type="PANTHER" id="PTHR11728">
    <property type="entry name" value="GLYCEROL-3-PHOSPHATE DEHYDROGENASE"/>
    <property type="match status" value="1"/>
</dbReference>
<dbReference type="PANTHER" id="PTHR11728:SF1">
    <property type="entry name" value="GLYCEROL-3-PHOSPHATE DEHYDROGENASE [NAD(+)] 2, CHLOROPLASTIC"/>
    <property type="match status" value="1"/>
</dbReference>
<dbReference type="Pfam" id="PF07479">
    <property type="entry name" value="NAD_Gly3P_dh_C"/>
    <property type="match status" value="1"/>
</dbReference>
<dbReference type="Pfam" id="PF01210">
    <property type="entry name" value="NAD_Gly3P_dh_N"/>
    <property type="match status" value="1"/>
</dbReference>
<dbReference type="PIRSF" id="PIRSF000114">
    <property type="entry name" value="Glycerol-3-P_dh"/>
    <property type="match status" value="1"/>
</dbReference>
<dbReference type="PRINTS" id="PR00077">
    <property type="entry name" value="GPDHDRGNASE"/>
</dbReference>
<dbReference type="SUPFAM" id="SSF48179">
    <property type="entry name" value="6-phosphogluconate dehydrogenase C-terminal domain-like"/>
    <property type="match status" value="1"/>
</dbReference>
<dbReference type="SUPFAM" id="SSF51735">
    <property type="entry name" value="NAD(P)-binding Rossmann-fold domains"/>
    <property type="match status" value="1"/>
</dbReference>
<accession>B1VG48</accession>
<sequence>MVQVAVMGAGSWGTTVAKVFADSGNPVTLWARRDEVADDVNDNHRNSAYLGDVDLPEGLSATTDPAAALHGAEIVVLGVPSQTLRSNLSSWREHIEPNATIISLAKGIEYETGMRMSQVIADVAGVGSDRVAVLTGPNLAKEVAQGQPAATLIACEDDERARFVQSAVAAPYFRPYTSQDVLGAEVAGTSKNVIALAAGIAAGCGFGANTNATVITRGLAETTRLALQLGADARTMAGLAGMGDLVATCTSPLSRNRSFGQRLGEGAGLEAAAEATKGQVAEGVVSCRSVQALARKAGVEMPITDAVVQVCYEDASPKEIINQLLGRTRKPE</sequence>
<organism>
    <name type="scientific">Corynebacterium urealyticum (strain ATCC 43042 / DSM 7109)</name>
    <dbReference type="NCBI Taxonomy" id="504474"/>
    <lineage>
        <taxon>Bacteria</taxon>
        <taxon>Bacillati</taxon>
        <taxon>Actinomycetota</taxon>
        <taxon>Actinomycetes</taxon>
        <taxon>Mycobacteriales</taxon>
        <taxon>Corynebacteriaceae</taxon>
        <taxon>Corynebacterium</taxon>
    </lineage>
</organism>
<comment type="function">
    <text evidence="1">Catalyzes the reduction of the glycolytic intermediate dihydroxyacetone phosphate (DHAP) to sn-glycerol 3-phosphate (G3P), the key precursor for phospholipid synthesis.</text>
</comment>
<comment type="catalytic activity">
    <reaction evidence="1">
        <text>sn-glycerol 3-phosphate + NAD(+) = dihydroxyacetone phosphate + NADH + H(+)</text>
        <dbReference type="Rhea" id="RHEA:11092"/>
        <dbReference type="ChEBI" id="CHEBI:15378"/>
        <dbReference type="ChEBI" id="CHEBI:57540"/>
        <dbReference type="ChEBI" id="CHEBI:57597"/>
        <dbReference type="ChEBI" id="CHEBI:57642"/>
        <dbReference type="ChEBI" id="CHEBI:57945"/>
        <dbReference type="EC" id="1.1.1.94"/>
    </reaction>
    <physiologicalReaction direction="right-to-left" evidence="1">
        <dbReference type="Rhea" id="RHEA:11094"/>
    </physiologicalReaction>
</comment>
<comment type="catalytic activity">
    <reaction evidence="1">
        <text>sn-glycerol 3-phosphate + NADP(+) = dihydroxyacetone phosphate + NADPH + H(+)</text>
        <dbReference type="Rhea" id="RHEA:11096"/>
        <dbReference type="ChEBI" id="CHEBI:15378"/>
        <dbReference type="ChEBI" id="CHEBI:57597"/>
        <dbReference type="ChEBI" id="CHEBI:57642"/>
        <dbReference type="ChEBI" id="CHEBI:57783"/>
        <dbReference type="ChEBI" id="CHEBI:58349"/>
        <dbReference type="EC" id="1.1.1.94"/>
    </reaction>
    <physiologicalReaction direction="right-to-left" evidence="1">
        <dbReference type="Rhea" id="RHEA:11098"/>
    </physiologicalReaction>
</comment>
<comment type="pathway">
    <text evidence="1">Membrane lipid metabolism; glycerophospholipid metabolism.</text>
</comment>
<comment type="subcellular location">
    <subcellularLocation>
        <location evidence="1">Cytoplasm</location>
    </subcellularLocation>
</comment>
<comment type="similarity">
    <text evidence="1">Belongs to the NAD-dependent glycerol-3-phosphate dehydrogenase family.</text>
</comment>
<evidence type="ECO:0000255" key="1">
    <source>
        <dbReference type="HAMAP-Rule" id="MF_00394"/>
    </source>
</evidence>
<keyword id="KW-0963">Cytoplasm</keyword>
<keyword id="KW-0444">Lipid biosynthesis</keyword>
<keyword id="KW-0443">Lipid metabolism</keyword>
<keyword id="KW-0520">NAD</keyword>
<keyword id="KW-0521">NADP</keyword>
<keyword id="KW-0547">Nucleotide-binding</keyword>
<keyword id="KW-0560">Oxidoreductase</keyword>
<keyword id="KW-0594">Phospholipid biosynthesis</keyword>
<keyword id="KW-1208">Phospholipid metabolism</keyword>
<keyword id="KW-1185">Reference proteome</keyword>